<comment type="function">
    <text evidence="1">Enhances bone morphogenetic protein (BMP) signaling in a paracrine manner. In contrast, it inhibits both the activin-A and TGFB1-mediated signaling pathways (By similarity).</text>
</comment>
<comment type="subunit">
    <text evidence="1">Interacts with BMP7 and, by doing so, enhances binding to the type I receptors that contains cytoplasmic serine/threonine protein kinase domains. Also able to interact with activin-A and TGFB1 (By similarity).</text>
</comment>
<comment type="subcellular location">
    <subcellularLocation>
        <location evidence="1">Secreted</location>
    </subcellularLocation>
</comment>
<comment type="alternative products">
    <event type="alternative splicing"/>
    <isoform>
        <id>Q6ZWJ8-3</id>
        <name>3</name>
        <sequence type="displayed"/>
    </isoform>
    <isoform>
        <id>Q6ZWJ8-2</id>
        <name>2</name>
        <sequence type="described" ref="VSP_059352 VSP_059356 VSP_059357"/>
    </isoform>
    <isoform>
        <id>Q6ZWJ8-4</id>
        <name>4</name>
        <sequence type="described" ref="VSP_059353 VSP_059354 VSP_059355"/>
    </isoform>
</comment>
<comment type="miscellaneous">
    <molecule>Isoform 2</molecule>
    <text evidence="7">May be produced at very low levels due to a premature stop codon in the mRNA, leading to nonsense-mediated mRNA decay.</text>
</comment>
<gene>
    <name evidence="8" type="primary">KCP</name>
    <name type="synonym">CRIM2</name>
    <name type="synonym">KCP1</name>
</gene>
<proteinExistence type="evidence at protein level"/>
<name>KCP_HUMAN</name>
<keyword id="KW-0025">Alternative splicing</keyword>
<keyword id="KW-0175">Coiled coil</keyword>
<keyword id="KW-1015">Disulfide bond</keyword>
<keyword id="KW-0325">Glycoprotein</keyword>
<keyword id="KW-1267">Proteomics identification</keyword>
<keyword id="KW-1185">Reference proteome</keyword>
<keyword id="KW-0677">Repeat</keyword>
<keyword id="KW-0964">Secreted</keyword>
<keyword id="KW-0732">Signal</keyword>
<sequence>MAGVGAAALSLLLHLGALALAAGAEGGAVPREPPGQQTTAHSSVLAGNSQEQWHPLREWLGRLEAAVMELREQNKDLQTRVRQLESCECHPASPQCWGLGRAWPEGARWEPDACTACVCQDGAAHCGPQAHLPHCRGCSQNGQTYGNGETFSPDACTTCRCLTGAVQCQGPSCSELNCLESCTPPGECCPICRPGCDYEGQLYEEGVTFLSSSNPCLQCTCLRSRVRCMALKCPPSPCPEPVLRPGHCCPTCQGCTEGGSHWEHGQEWTTPGDPCRICRCLEGHIQCRQRECASLCPYPARPLPGTCCPVCDGCFLNGREHRSGEPVGSGDPCSHCRCANGSVQCEPLPCPPVPCRHPGKIPGQCCPVCDGCEYQGHQYQSQETFRLQERGLCVRCSCQAGEVSCEEQECPVTPCALPASGRQLCPACELDGEEFAEGVQWEPDGRPCTACVCQDGVPKCGAVLCPPAPCQHPTQPPGACCPSCDSCTYHSQVYANGQNFTDADSPCHACHCQDGTVTCSLVDCPPTTCARPQSGPGQCCPRCPDCILEEEVFVDGESFSHPRDPCQECRCQEGHAHCQPRPCPRAPCAHPLPGTCCPNDCSGCAFGGKEYPSGADFPHPSDPCRLCRCLSGNVQCLARRCVPLPCPEPVLLPGECCPQCPAAPAPAGCPRPGAAHARHQEYFSPPGDPCRRCLCLDGSVSCQRLPCPPAPCAHPRQGPCCPSCDGCLYQGKEFASGERFPSPTAACHLCLCWEGSVSCEPKACAPALCPFPARGDCCPDCDGCEYLGESYLSNQEFPDPREPCNLCTCLGGFVTCGRRPCEPPGCSHPLIPSGHCCPTCQGCRYHGVTTASGETLPDPLDPTCSLCTCQEGSMRCQKKPCPPALCPHPSPGPCFCPVCHSCLSQGREHQDGEEFEGPAGSCEWCRCQAGQVSCVRLQCPPLPCKLQVTERGSCCPRCRGCLAHGEEHPEGSRWVPPDSACSSCVCHEGVVTCARIQCISSCAQPRQGPHDCCPQCSDCEHEGRKYEPGESFQPGADPCEVCICEPQPEGPPSLRCHRRQCPSLVGCPPSQLLPPGPQHCCPTCAEALSNCSEGLLGSELAPPDPCYTCQCQDLTWLCIHQACPELSCPLSERHTPPGSCCPVCRAPTQSCVHQGREVASGERWTVDTCTSCSCMAGTVRCQSQRCSPLSCGPDKAPALSPGSCCPRCLPRPASCMAFGDPHYRTFDGRLLHFQGSCSYVLAKDCHSGDFSVHVTNDDRGRSGVAWTQEVAVLLGDMAVRLLQDGAVTVDGHPVALPFLQEPLLYVELRGHTVILHAQPGLQVLWDGQSQVEVSVPGSYQGRTCGLCGNFNGFAQDDLQGPEGLLLPSEAAFGNSWQVSEGLWPGRPCSAGREVDPCRAAGYRARREANARCGVLKSSPFSRCHAVVPPEPFFAACVYDLCACGPGSSADACLCDALEAYASHCRQAGVTPTWRGPTLCVVGCPLERGFVFDECGPPCPRTCFNQHIPLGELAAHCVRPCVPGCQCPAGLVEHEAHCIPPEACPQVLLTGDQPLGARPSPSREPQETP</sequence>
<reference key="1">
    <citation type="journal article" date="2004" name="Nat. Genet.">
        <title>Complete sequencing and characterization of 21,243 full-length human cDNAs.</title>
        <authorList>
            <person name="Ota T."/>
            <person name="Suzuki Y."/>
            <person name="Nishikawa T."/>
            <person name="Otsuki T."/>
            <person name="Sugiyama T."/>
            <person name="Irie R."/>
            <person name="Wakamatsu A."/>
            <person name="Hayashi K."/>
            <person name="Sato H."/>
            <person name="Nagai K."/>
            <person name="Kimura K."/>
            <person name="Makita H."/>
            <person name="Sekine M."/>
            <person name="Obayashi M."/>
            <person name="Nishi T."/>
            <person name="Shibahara T."/>
            <person name="Tanaka T."/>
            <person name="Ishii S."/>
            <person name="Yamamoto J."/>
            <person name="Saito K."/>
            <person name="Kawai Y."/>
            <person name="Isono Y."/>
            <person name="Nakamura Y."/>
            <person name="Nagahari K."/>
            <person name="Murakami K."/>
            <person name="Yasuda T."/>
            <person name="Iwayanagi T."/>
            <person name="Wagatsuma M."/>
            <person name="Shiratori A."/>
            <person name="Sudo H."/>
            <person name="Hosoiri T."/>
            <person name="Kaku Y."/>
            <person name="Kodaira H."/>
            <person name="Kondo H."/>
            <person name="Sugawara M."/>
            <person name="Takahashi M."/>
            <person name="Kanda K."/>
            <person name="Yokoi T."/>
            <person name="Furuya T."/>
            <person name="Kikkawa E."/>
            <person name="Omura Y."/>
            <person name="Abe K."/>
            <person name="Kamihara K."/>
            <person name="Katsuta N."/>
            <person name="Sato K."/>
            <person name="Tanikawa M."/>
            <person name="Yamazaki M."/>
            <person name="Ninomiya K."/>
            <person name="Ishibashi T."/>
            <person name="Yamashita H."/>
            <person name="Murakawa K."/>
            <person name="Fujimori K."/>
            <person name="Tanai H."/>
            <person name="Kimata M."/>
            <person name="Watanabe M."/>
            <person name="Hiraoka S."/>
            <person name="Chiba Y."/>
            <person name="Ishida S."/>
            <person name="Ono Y."/>
            <person name="Takiguchi S."/>
            <person name="Watanabe S."/>
            <person name="Yosida M."/>
            <person name="Hotuta T."/>
            <person name="Kusano J."/>
            <person name="Kanehori K."/>
            <person name="Takahashi-Fujii A."/>
            <person name="Hara H."/>
            <person name="Tanase T.-O."/>
            <person name="Nomura Y."/>
            <person name="Togiya S."/>
            <person name="Komai F."/>
            <person name="Hara R."/>
            <person name="Takeuchi K."/>
            <person name="Arita M."/>
            <person name="Imose N."/>
            <person name="Musashino K."/>
            <person name="Yuuki H."/>
            <person name="Oshima A."/>
            <person name="Sasaki N."/>
            <person name="Aotsuka S."/>
            <person name="Yoshikawa Y."/>
            <person name="Matsunawa H."/>
            <person name="Ichihara T."/>
            <person name="Shiohata N."/>
            <person name="Sano S."/>
            <person name="Moriya S."/>
            <person name="Momiyama H."/>
            <person name="Satoh N."/>
            <person name="Takami S."/>
            <person name="Terashima Y."/>
            <person name="Suzuki O."/>
            <person name="Nakagawa S."/>
            <person name="Senoh A."/>
            <person name="Mizoguchi H."/>
            <person name="Goto Y."/>
            <person name="Shimizu F."/>
            <person name="Wakebe H."/>
            <person name="Hishigaki H."/>
            <person name="Watanabe T."/>
            <person name="Sugiyama A."/>
            <person name="Takemoto M."/>
            <person name="Kawakami B."/>
            <person name="Yamazaki M."/>
            <person name="Watanabe K."/>
            <person name="Kumagai A."/>
            <person name="Itakura S."/>
            <person name="Fukuzumi Y."/>
            <person name="Fujimori Y."/>
            <person name="Komiyama M."/>
            <person name="Tashiro H."/>
            <person name="Tanigami A."/>
            <person name="Fujiwara T."/>
            <person name="Ono T."/>
            <person name="Yamada K."/>
            <person name="Fujii Y."/>
            <person name="Ozaki K."/>
            <person name="Hirao M."/>
            <person name="Ohmori Y."/>
            <person name="Kawabata A."/>
            <person name="Hikiji T."/>
            <person name="Kobatake N."/>
            <person name="Inagaki H."/>
            <person name="Ikema Y."/>
            <person name="Okamoto S."/>
            <person name="Okitani R."/>
            <person name="Kawakami T."/>
            <person name="Noguchi S."/>
            <person name="Itoh T."/>
            <person name="Shigeta K."/>
            <person name="Senba T."/>
            <person name="Matsumura K."/>
            <person name="Nakajima Y."/>
            <person name="Mizuno T."/>
            <person name="Morinaga M."/>
            <person name="Sasaki M."/>
            <person name="Togashi T."/>
            <person name="Oyama M."/>
            <person name="Hata H."/>
            <person name="Watanabe M."/>
            <person name="Komatsu T."/>
            <person name="Mizushima-Sugano J."/>
            <person name="Satoh T."/>
            <person name="Shirai Y."/>
            <person name="Takahashi Y."/>
            <person name="Nakagawa K."/>
            <person name="Okumura K."/>
            <person name="Nagase T."/>
            <person name="Nomura N."/>
            <person name="Kikuchi H."/>
            <person name="Masuho Y."/>
            <person name="Yamashita R."/>
            <person name="Nakai K."/>
            <person name="Yada T."/>
            <person name="Nakamura Y."/>
            <person name="Ohara O."/>
            <person name="Isogai T."/>
            <person name="Sugano S."/>
        </authorList>
    </citation>
    <scope>NUCLEOTIDE SEQUENCE [LARGE SCALE MRNA] (ISOFORMS 2 AND 4)</scope>
    <scope>VARIANTS GLU-459 AND VAL-688</scope>
    <source>
        <tissue>Thalamus</tissue>
    </source>
</reference>
<reference key="2">
    <citation type="journal article" date="2003" name="Nature">
        <title>The DNA sequence of human chromosome 7.</title>
        <authorList>
            <person name="Hillier L.W."/>
            <person name="Fulton R.S."/>
            <person name="Fulton L.A."/>
            <person name="Graves T.A."/>
            <person name="Pepin K.H."/>
            <person name="Wagner-McPherson C."/>
            <person name="Layman D."/>
            <person name="Maas J."/>
            <person name="Jaeger S."/>
            <person name="Walker R."/>
            <person name="Wylie K."/>
            <person name="Sekhon M."/>
            <person name="Becker M.C."/>
            <person name="O'Laughlin M.D."/>
            <person name="Schaller M.E."/>
            <person name="Fewell G.A."/>
            <person name="Delehaunty K.D."/>
            <person name="Miner T.L."/>
            <person name="Nash W.E."/>
            <person name="Cordes M."/>
            <person name="Du H."/>
            <person name="Sun H."/>
            <person name="Edwards J."/>
            <person name="Bradshaw-Cordum H."/>
            <person name="Ali J."/>
            <person name="Andrews S."/>
            <person name="Isak A."/>
            <person name="Vanbrunt A."/>
            <person name="Nguyen C."/>
            <person name="Du F."/>
            <person name="Lamar B."/>
            <person name="Courtney L."/>
            <person name="Kalicki J."/>
            <person name="Ozersky P."/>
            <person name="Bielicki L."/>
            <person name="Scott K."/>
            <person name="Holmes A."/>
            <person name="Harkins R."/>
            <person name="Harris A."/>
            <person name="Strong C.M."/>
            <person name="Hou S."/>
            <person name="Tomlinson C."/>
            <person name="Dauphin-Kohlberg S."/>
            <person name="Kozlowicz-Reilly A."/>
            <person name="Leonard S."/>
            <person name="Rohlfing T."/>
            <person name="Rock S.M."/>
            <person name="Tin-Wollam A.-M."/>
            <person name="Abbott A."/>
            <person name="Minx P."/>
            <person name="Maupin R."/>
            <person name="Strowmatt C."/>
            <person name="Latreille P."/>
            <person name="Miller N."/>
            <person name="Johnson D."/>
            <person name="Murray J."/>
            <person name="Woessner J.P."/>
            <person name="Wendl M.C."/>
            <person name="Yang S.-P."/>
            <person name="Schultz B.R."/>
            <person name="Wallis J.W."/>
            <person name="Spieth J."/>
            <person name="Bieri T.A."/>
            <person name="Nelson J.O."/>
            <person name="Berkowicz N."/>
            <person name="Wohldmann P.E."/>
            <person name="Cook L.L."/>
            <person name="Hickenbotham M.T."/>
            <person name="Eldred J."/>
            <person name="Williams D."/>
            <person name="Bedell J.A."/>
            <person name="Mardis E.R."/>
            <person name="Clifton S.W."/>
            <person name="Chissoe S.L."/>
            <person name="Marra M.A."/>
            <person name="Raymond C."/>
            <person name="Haugen E."/>
            <person name="Gillett W."/>
            <person name="Zhou Y."/>
            <person name="James R."/>
            <person name="Phelps K."/>
            <person name="Iadanoto S."/>
            <person name="Bubb K."/>
            <person name="Simms E."/>
            <person name="Levy R."/>
            <person name="Clendenning J."/>
            <person name="Kaul R."/>
            <person name="Kent W.J."/>
            <person name="Furey T.S."/>
            <person name="Baertsch R.A."/>
            <person name="Brent M.R."/>
            <person name="Keibler E."/>
            <person name="Flicek P."/>
            <person name="Bork P."/>
            <person name="Suyama M."/>
            <person name="Bailey J.A."/>
            <person name="Portnoy M.E."/>
            <person name="Torrents D."/>
            <person name="Chinwalla A.T."/>
            <person name="Gish W.R."/>
            <person name="Eddy S.R."/>
            <person name="McPherson J.D."/>
            <person name="Olson M.V."/>
            <person name="Eichler E.E."/>
            <person name="Green E.D."/>
            <person name="Waterston R.H."/>
            <person name="Wilson R.K."/>
        </authorList>
    </citation>
    <scope>NUCLEOTIDE SEQUENCE [LARGE SCALE GENOMIC DNA]</scope>
</reference>
<reference key="3">
    <citation type="submission" date="2005-07" db="EMBL/GenBank/DDBJ databases">
        <authorList>
            <person name="Mural R.J."/>
            <person name="Istrail S."/>
            <person name="Sutton G.G."/>
            <person name="Florea L."/>
            <person name="Halpern A.L."/>
            <person name="Mobarry C.M."/>
            <person name="Lippert R."/>
            <person name="Walenz B."/>
            <person name="Shatkay H."/>
            <person name="Dew I."/>
            <person name="Miller J.R."/>
            <person name="Flanigan M.J."/>
            <person name="Edwards N.J."/>
            <person name="Bolanos R."/>
            <person name="Fasulo D."/>
            <person name="Halldorsson B.V."/>
            <person name="Hannenhalli S."/>
            <person name="Turner R."/>
            <person name="Yooseph S."/>
            <person name="Lu F."/>
            <person name="Nusskern D.R."/>
            <person name="Shue B.C."/>
            <person name="Zheng X.H."/>
            <person name="Zhong F."/>
            <person name="Delcher A.L."/>
            <person name="Huson D.H."/>
            <person name="Kravitz S.A."/>
            <person name="Mouchard L."/>
            <person name="Reinert K."/>
            <person name="Remington K.A."/>
            <person name="Clark A.G."/>
            <person name="Waterman M.S."/>
            <person name="Eichler E.E."/>
            <person name="Adams M.D."/>
            <person name="Hunkapiller M.W."/>
            <person name="Myers E.W."/>
            <person name="Venter J.C."/>
        </authorList>
    </citation>
    <scope>NUCLEOTIDE SEQUENCE [LARGE SCALE GENOMIC DNA]</scope>
</reference>
<organism>
    <name type="scientific">Homo sapiens</name>
    <name type="common">Human</name>
    <dbReference type="NCBI Taxonomy" id="9606"/>
    <lineage>
        <taxon>Eukaryota</taxon>
        <taxon>Metazoa</taxon>
        <taxon>Chordata</taxon>
        <taxon>Craniata</taxon>
        <taxon>Vertebrata</taxon>
        <taxon>Euteleostomi</taxon>
        <taxon>Mammalia</taxon>
        <taxon>Eutheria</taxon>
        <taxon>Euarchontoglires</taxon>
        <taxon>Primates</taxon>
        <taxon>Haplorrhini</taxon>
        <taxon>Catarrhini</taxon>
        <taxon>Hominidae</taxon>
        <taxon>Homo</taxon>
    </lineage>
</organism>
<evidence type="ECO:0000250" key="1"/>
<evidence type="ECO:0000255" key="2"/>
<evidence type="ECO:0000255" key="3">
    <source>
        <dbReference type="PROSITE-ProRule" id="PRU00220"/>
    </source>
</evidence>
<evidence type="ECO:0000255" key="4">
    <source>
        <dbReference type="PROSITE-ProRule" id="PRU00580"/>
    </source>
</evidence>
<evidence type="ECO:0000256" key="5">
    <source>
        <dbReference type="SAM" id="MobiDB-lite"/>
    </source>
</evidence>
<evidence type="ECO:0000269" key="6">
    <source>
    </source>
</evidence>
<evidence type="ECO:0000305" key="7"/>
<evidence type="ECO:0000312" key="8">
    <source>
        <dbReference type="HGNC" id="HGNC:17585"/>
    </source>
</evidence>
<accession>Q6ZWJ8</accession>
<accession>A0A087WT73</accession>
<accession>Q8NBE0</accession>
<protein>
    <recommendedName>
        <fullName evidence="7">Kielin/chordin-like protein</fullName>
    </recommendedName>
    <alternativeName>
        <fullName>Cysteine-rich BMP regulator 2</fullName>
    </alternativeName>
    <alternativeName>
        <fullName>Cysteine-rich motor neuron 2 protein</fullName>
        <shortName>CRIM-2</shortName>
    </alternativeName>
    <alternativeName>
        <fullName>Kielin/chordin-like protein 1</fullName>
        <shortName>KCP-1</shortName>
    </alternativeName>
</protein>
<dbReference type="EMBL" id="AK122706">
    <property type="protein sequence ID" value="BAC85504.1"/>
    <property type="molecule type" value="mRNA"/>
</dbReference>
<dbReference type="EMBL" id="AK090684">
    <property type="protein sequence ID" value="BAC03505.1"/>
    <property type="molecule type" value="mRNA"/>
</dbReference>
<dbReference type="EMBL" id="AC025594">
    <property type="status" value="NOT_ANNOTATED_CDS"/>
    <property type="molecule type" value="Genomic_DNA"/>
</dbReference>
<dbReference type="EMBL" id="KF495713">
    <property type="status" value="NOT_ANNOTATED_CDS"/>
    <property type="molecule type" value="Genomic_DNA"/>
</dbReference>
<dbReference type="EMBL" id="KF510975">
    <property type="status" value="NOT_ANNOTATED_CDS"/>
    <property type="molecule type" value="Genomic_DNA"/>
</dbReference>
<dbReference type="EMBL" id="CH471070">
    <property type="protein sequence ID" value="EAW83694.1"/>
    <property type="molecule type" value="Genomic_DNA"/>
</dbReference>
<dbReference type="RefSeq" id="NP_001129386.1">
    <property type="nucleotide sequence ID" value="NM_001135914.1"/>
</dbReference>
<dbReference type="RefSeq" id="NP_955381.2">
    <molecule id="Q6ZWJ8-4"/>
    <property type="nucleotide sequence ID" value="NM_199349.3"/>
</dbReference>
<dbReference type="SMR" id="Q6ZWJ8"/>
<dbReference type="FunCoup" id="Q6ZWJ8">
    <property type="interactions" value="155"/>
</dbReference>
<dbReference type="STRING" id="9606.ENSP00000479679"/>
<dbReference type="GlyCosmos" id="Q6ZWJ8">
    <property type="glycosylation" value="5 sites, 2 glycans"/>
</dbReference>
<dbReference type="GlyGen" id="Q6ZWJ8">
    <property type="glycosylation" value="5 sites, 2 O-linked glycans (2 sites)"/>
</dbReference>
<dbReference type="iPTMnet" id="Q6ZWJ8"/>
<dbReference type="PhosphoSitePlus" id="Q6ZWJ8"/>
<dbReference type="BioMuta" id="KCP"/>
<dbReference type="DMDM" id="218511989"/>
<dbReference type="MassIVE" id="Q6ZWJ8"/>
<dbReference type="PaxDb" id="9606-ENSP00000479679"/>
<dbReference type="PeptideAtlas" id="Q6ZWJ8"/>
<dbReference type="ProteomicsDB" id="68490">
    <molecule id="Q6ZWJ8-2"/>
</dbReference>
<dbReference type="Antibodypedia" id="73205">
    <property type="antibodies" value="25 antibodies from 13 providers"/>
</dbReference>
<dbReference type="DNASU" id="375616"/>
<dbReference type="Ensembl" id="ENST00000613019.4">
    <molecule id="Q6ZWJ8-3"/>
    <property type="protein sequence ID" value="ENSP00000477644.1"/>
    <property type="gene ID" value="ENSG00000135253.16"/>
</dbReference>
<dbReference type="GeneID" id="375616"/>
<dbReference type="KEGG" id="hsa:375616"/>
<dbReference type="AGR" id="HGNC:17585"/>
<dbReference type="CTD" id="375616"/>
<dbReference type="DisGeNET" id="375616"/>
<dbReference type="GeneCards" id="KCP"/>
<dbReference type="HGNC" id="HGNC:17585">
    <property type="gene designation" value="KCP"/>
</dbReference>
<dbReference type="HPA" id="ENSG00000135253">
    <property type="expression patterns" value="Tissue enriched (kidney)"/>
</dbReference>
<dbReference type="MIM" id="609344">
    <property type="type" value="gene"/>
</dbReference>
<dbReference type="neXtProt" id="NX_Q6ZWJ8"/>
<dbReference type="OpenTargets" id="ENSG00000135253"/>
<dbReference type="PharmGKB" id="PA164721151"/>
<dbReference type="VEuPathDB" id="HostDB:ENSG00000135253"/>
<dbReference type="GeneTree" id="ENSGT00940000160243"/>
<dbReference type="InParanoid" id="Q6ZWJ8"/>
<dbReference type="OrthoDB" id="6132182at2759"/>
<dbReference type="PAN-GO" id="Q6ZWJ8">
    <property type="GO annotations" value="4 GO annotations based on evolutionary models"/>
</dbReference>
<dbReference type="PhylomeDB" id="Q6ZWJ8"/>
<dbReference type="PathwayCommons" id="Q6ZWJ8"/>
<dbReference type="BioGRID-ORCS" id="375616">
    <property type="hits" value="7 hits in 251 CRISPR screens"/>
</dbReference>
<dbReference type="GenomeRNAi" id="375616"/>
<dbReference type="Pharos" id="Q6ZWJ8">
    <property type="development level" value="Tdark"/>
</dbReference>
<dbReference type="PRO" id="PR:Q6ZWJ8"/>
<dbReference type="Proteomes" id="UP000005640">
    <property type="component" value="Chromosome 7"/>
</dbReference>
<dbReference type="RNAct" id="Q6ZWJ8">
    <property type="molecule type" value="protein"/>
</dbReference>
<dbReference type="Bgee" id="ENSG00000135253">
    <property type="expression patterns" value="Expressed in metanephros cortex and 106 other cell types or tissues"/>
</dbReference>
<dbReference type="ExpressionAtlas" id="Q6ZWJ8">
    <property type="expression patterns" value="baseline and differential"/>
</dbReference>
<dbReference type="GO" id="GO:0005576">
    <property type="term" value="C:extracellular region"/>
    <property type="evidence" value="ECO:0000318"/>
    <property type="project" value="GO_Central"/>
</dbReference>
<dbReference type="GO" id="GO:0030513">
    <property type="term" value="P:positive regulation of BMP signaling pathway"/>
    <property type="evidence" value="ECO:0000318"/>
    <property type="project" value="GO_Central"/>
</dbReference>
<dbReference type="CDD" id="cd19941">
    <property type="entry name" value="TIL"/>
    <property type="match status" value="1"/>
</dbReference>
<dbReference type="Gene3D" id="6.20.200.20">
    <property type="match status" value="14"/>
</dbReference>
<dbReference type="Gene3D" id="2.10.70.10">
    <property type="entry name" value="Complement Module, domain 1"/>
    <property type="match status" value="3"/>
</dbReference>
<dbReference type="InterPro" id="IPR052424">
    <property type="entry name" value="Kielin_Chordin-BMP_Reg"/>
</dbReference>
<dbReference type="InterPro" id="IPR036084">
    <property type="entry name" value="Ser_inhib-like_sf"/>
</dbReference>
<dbReference type="InterPro" id="IPR014853">
    <property type="entry name" value="VWF/SSPO/ZAN-like_Cys-rich_dom"/>
</dbReference>
<dbReference type="InterPro" id="IPR001007">
    <property type="entry name" value="VWF_dom"/>
</dbReference>
<dbReference type="InterPro" id="IPR001846">
    <property type="entry name" value="VWF_type-D"/>
</dbReference>
<dbReference type="PANTHER" id="PTHR46698">
    <property type="entry name" value="CROSSVEINLESS 2"/>
    <property type="match status" value="1"/>
</dbReference>
<dbReference type="PANTHER" id="PTHR46698:SF2">
    <property type="entry name" value="KIELIN_CHORDIN-LIKE PROTEIN"/>
    <property type="match status" value="1"/>
</dbReference>
<dbReference type="Pfam" id="PF00093">
    <property type="entry name" value="VWC"/>
    <property type="match status" value="9"/>
</dbReference>
<dbReference type="Pfam" id="PF00094">
    <property type="entry name" value="VWD"/>
    <property type="match status" value="1"/>
</dbReference>
<dbReference type="SMART" id="SM00832">
    <property type="entry name" value="C8"/>
    <property type="match status" value="1"/>
</dbReference>
<dbReference type="SMART" id="SM00214">
    <property type="entry name" value="VWC"/>
    <property type="match status" value="19"/>
</dbReference>
<dbReference type="SMART" id="SM00215">
    <property type="entry name" value="VWC_out"/>
    <property type="match status" value="8"/>
</dbReference>
<dbReference type="SMART" id="SM00216">
    <property type="entry name" value="VWD"/>
    <property type="match status" value="1"/>
</dbReference>
<dbReference type="SUPFAM" id="SSF57603">
    <property type="entry name" value="FnI-like domain"/>
    <property type="match status" value="19"/>
</dbReference>
<dbReference type="SUPFAM" id="SSF57567">
    <property type="entry name" value="Serine protease inhibitors"/>
    <property type="match status" value="1"/>
</dbReference>
<dbReference type="PROSITE" id="PS01208">
    <property type="entry name" value="VWFC_1"/>
    <property type="match status" value="13"/>
</dbReference>
<dbReference type="PROSITE" id="PS50184">
    <property type="entry name" value="VWFC_2"/>
    <property type="match status" value="16"/>
</dbReference>
<dbReference type="PROSITE" id="PS51233">
    <property type="entry name" value="VWFD"/>
    <property type="match status" value="1"/>
</dbReference>
<feature type="signal peptide" evidence="2">
    <location>
        <begin position="1"/>
        <end position="23"/>
    </location>
</feature>
<feature type="chain" id="PRO_0000318586" description="Kielin/chordin-like protein" evidence="2">
    <location>
        <begin position="24"/>
        <end position="1568"/>
    </location>
</feature>
<feature type="domain" description="VWFC 1" evidence="3">
    <location>
        <begin position="136"/>
        <end position="193"/>
    </location>
</feature>
<feature type="domain" description="VWFC 2" evidence="3">
    <location>
        <begin position="194"/>
        <end position="253"/>
    </location>
</feature>
<feature type="domain" description="VWFC 3" evidence="3">
    <location>
        <begin position="253"/>
        <end position="312"/>
    </location>
</feature>
<feature type="domain" description="VWFC 4" evidence="3">
    <location>
        <begin position="312"/>
        <end position="370"/>
    </location>
</feature>
<feature type="domain" description="VWFC 5" evidence="3">
    <location>
        <begin position="426"/>
        <end position="485"/>
    </location>
</feature>
<feature type="domain" description="VWFC 6" evidence="3">
    <location>
        <begin position="485"/>
        <end position="544"/>
    </location>
</feature>
<feature type="domain" description="VWFC 7" evidence="3">
    <location>
        <begin position="544"/>
        <end position="602"/>
    </location>
</feature>
<feature type="domain" description="VWFC 8" evidence="3">
    <location>
        <begin position="602"/>
        <end position="661"/>
    </location>
</feature>
<feature type="domain" description="VWFC 9" evidence="3">
    <location>
        <begin position="667"/>
        <end position="725"/>
    </location>
</feature>
<feature type="domain" description="VWFC 10" evidence="3">
    <location>
        <begin position="725"/>
        <end position="782"/>
    </location>
</feature>
<feature type="domain" description="VWFC 11" evidence="3">
    <location>
        <begin position="782"/>
        <end position="841"/>
    </location>
</feature>
<feature type="domain" description="VWFC 12" evidence="3">
    <location>
        <begin position="900"/>
        <end position="959"/>
    </location>
</feature>
<feature type="domain" description="VWFC 13" evidence="3">
    <location>
        <begin position="959"/>
        <end position="1017"/>
    </location>
</feature>
<feature type="domain" description="VWFC 14" evidence="3">
    <location>
        <begin position="1017"/>
        <end position="1085"/>
    </location>
</feature>
<feature type="domain" description="VWFC 15" evidence="3">
    <location>
        <begin position="1082"/>
        <end position="1145"/>
    </location>
</feature>
<feature type="domain" description="VWFC 16" evidence="3">
    <location>
        <begin position="1149"/>
        <end position="1209"/>
    </location>
</feature>
<feature type="domain" description="VWFD" evidence="4">
    <location>
        <begin position="1213"/>
        <end position="1389"/>
    </location>
</feature>
<feature type="domain" description="TIL">
    <location>
        <begin position="1483"/>
        <end position="1543"/>
    </location>
</feature>
<feature type="region of interest" description="Disordered" evidence="5">
    <location>
        <begin position="27"/>
        <end position="49"/>
    </location>
</feature>
<feature type="coiled-coil region" evidence="2">
    <location>
        <begin position="60"/>
        <end position="87"/>
    </location>
</feature>
<feature type="compositionally biased region" description="Polar residues" evidence="5">
    <location>
        <begin position="35"/>
        <end position="49"/>
    </location>
</feature>
<feature type="glycosylation site" description="N-linked (GlcNAc...) asparagine" evidence="2">
    <location>
        <position position="340"/>
    </location>
</feature>
<feature type="glycosylation site" description="N-linked (GlcNAc...) asparagine" evidence="2">
    <location>
        <position position="499"/>
    </location>
</feature>
<feature type="glycosylation site" description="N-linked (GlcNAc...) asparagine" evidence="2">
    <location>
        <position position="1090"/>
    </location>
</feature>
<feature type="disulfide bond" evidence="4">
    <location>
        <begin position="1215"/>
        <end position="1347"/>
    </location>
</feature>
<feature type="disulfide bond" evidence="4">
    <location>
        <begin position="1237"/>
        <end position="1388"/>
    </location>
</feature>
<feature type="splice variant" id="VSP_059352" description="In isoform 2.">
    <location>
        <begin position="1"/>
        <end position="1174"/>
    </location>
</feature>
<feature type="splice variant" id="VSP_059353" description="In isoform 4.">
    <original>TGAVQCQGPSCSELNCLESCTPPGECCPICR</original>
    <variation>EGTITCNQKPCPRGPCPEPGACCPHCK</variation>
    <location>
        <begin position="163"/>
        <end position="193"/>
    </location>
</feature>
<feature type="splice variant" id="VSP_059354" description="In isoform 4.">
    <original>CEYLGESYLSNQEFPDPREPCNLCTCLGGFVTCGR</original>
    <variation>EGHGIGSCRGGMRETRGLGQNNLYCPRVDLKYLLQ</variation>
    <location>
        <begin position="784"/>
        <end position="818"/>
    </location>
</feature>
<feature type="splice variant" id="VSP_059355" description="In isoform 4.">
    <location>
        <begin position="819"/>
        <end position="1568"/>
    </location>
</feature>
<feature type="splice variant" id="VSP_059356" description="In isoform 2.">
    <original>SEGLWPGRPCSAGREVDPCRAAGYRARREANARCGVLKSSPFSRCHAVVPPEPFFAACVYDLCACGPGSSADACLCDALEAYASHCRQAG</original>
    <variation>QEGRGYPPGLELPPVLLQMEWSRRAQEQLLWDLELLTGVELGLFWPPQAQFFGPRGQAQQAWSQCCQPGGSTGGDPEQPILKASCDGSRL</variation>
    <location>
        <begin position="1379"/>
        <end position="1468"/>
    </location>
</feature>
<feature type="splice variant" id="VSP_059357" description="In isoform 2.">
    <location>
        <begin position="1469"/>
        <end position="1568"/>
    </location>
</feature>
<feature type="sequence variant" id="VAR_038783" description="In dbSNP:rs7787221.">
    <original>G</original>
    <variation>E</variation>
    <location>
        <position position="47"/>
    </location>
</feature>
<feature type="sequence variant" id="VAR_059625" description="In dbSNP:rs7782976." evidence="6">
    <original>K</original>
    <variation>E</variation>
    <location>
        <position position="459"/>
    </location>
</feature>
<feature type="sequence variant" id="VAR_059626" description="In dbSNP:rs3734971." evidence="6">
    <original>D</original>
    <variation>V</variation>
    <location>
        <position position="688"/>
    </location>
</feature>
<feature type="sequence variant" id="VAR_059627" description="In dbSNP:rs7786641.">
    <original>P</original>
    <variation>R</variation>
    <location>
        <position position="1193"/>
    </location>
</feature>
<feature type="sequence conflict" description="In Ref. 1; BAC85504." evidence="7" ref="1">
    <original>N</original>
    <variation>K</variation>
    <location>
        <position position="214"/>
    </location>
</feature>